<gene>
    <name evidence="9" type="primary">GRIN3B</name>
</gene>
<comment type="function">
    <text evidence="2 3">Component of a non-conventional N-methyl-D-aspartate (NMDA) receptors (NMDARs) that function as heterotetrameric, ligand-gated cation channels with low calcium permeability and low voltage-dependent block by Mg(2+) (By similarity). Forms glutamatergic receptor complexes with GluN1 and GluN2 subunits which are activated by glycine binding to the GluN1 and GluN3 subunits and L-glutamate binding to GluN2 subunits (By similarity). Forms excitatory glycinergic receptor complexes with GluN1 alone which are activated by glycine binding to the GluN1 and GluN3 subunits. GluN3B subunit also binds D-serine and, in the absence of glycine, activates glycinergic receptor complexes, but with lower efficacy than glycine (By similarity). Each GluN3 subunit confers differential attributes to channel properties, including activation, deactivation and desensitization kinetics, pH sensitivity, Ca2(+) permeability, and binding to allosteric modulators (By similarity).</text>
</comment>
<comment type="catalytic activity">
    <reaction evidence="3">
        <text>Ca(2+)(in) = Ca(2+)(out)</text>
        <dbReference type="Rhea" id="RHEA:29671"/>
        <dbReference type="ChEBI" id="CHEBI:29108"/>
    </reaction>
</comment>
<comment type="catalytic activity">
    <reaction evidence="2">
        <text>Na(+)(in) = Na(+)(out)</text>
        <dbReference type="Rhea" id="RHEA:34963"/>
        <dbReference type="ChEBI" id="CHEBI:29101"/>
    </reaction>
</comment>
<comment type="subunit">
    <text evidence="3 8">Forms heterotetrameric channels that contain at least two GluN1 subunits and at least a combination of one GluN2 and one GluN3 subunits (in vitro) (By similarity). Forms heterotetrameric channels composed of two GluN1/zeta subunits (GRIN1), and two identical GluN3 subunits (GRIN3A or GRIN3B) (in vitro) (Probable). Does not form functional homomeric channels (By similarity).</text>
</comment>
<comment type="subcellular location">
    <subcellularLocation>
        <location evidence="3">Cell membrane</location>
        <topology evidence="1">Multi-pass membrane protein</topology>
    </subcellularLocation>
    <subcellularLocation>
        <location evidence="3">Postsynaptic cell membrane</location>
    </subcellularLocation>
    <text evidence="3">Requires the presence of GRIN1 to be targeted at the plasma membrane.</text>
</comment>
<comment type="similarity">
    <text evidence="8">Belongs to the glutamate-gated ion channel (TC 1.A.10.1) family. NR3B/GRIN3B subfamily.</text>
</comment>
<comment type="sequence caution" evidence="8">
    <conflict type="erroneous gene model prediction">
        <sequence resource="EMBL-CDS" id="AAC12680"/>
    </conflict>
</comment>
<feature type="signal peptide" evidence="4">
    <location>
        <begin position="1"/>
        <end position="22"/>
    </location>
</feature>
<feature type="chain" id="PRO_0000011570" description="Glutamate receptor ionotropic, NMDA 3B">
    <location>
        <begin position="23"/>
        <end position="1043"/>
    </location>
</feature>
<feature type="topological domain" description="Extracellular" evidence="1">
    <location>
        <begin position="23"/>
        <end position="574"/>
    </location>
</feature>
<feature type="transmembrane region" description="Helical" evidence="1">
    <location>
        <begin position="575"/>
        <end position="594"/>
    </location>
</feature>
<feature type="topological domain" description="Cytoplasmic" evidence="1">
    <location>
        <begin position="595"/>
        <end position="615"/>
    </location>
</feature>
<feature type="intramembrane region" description="Discontinuously helical" evidence="1">
    <location>
        <begin position="616"/>
        <end position="627"/>
    </location>
</feature>
<feature type="topological domain" description="Cytoplasmic" evidence="1">
    <location>
        <begin position="628"/>
        <end position="641"/>
    </location>
</feature>
<feature type="transmembrane region" description="Helical" evidence="1">
    <location>
        <begin position="642"/>
        <end position="661"/>
    </location>
</feature>
<feature type="topological domain" description="Extracellular" evidence="1">
    <location>
        <begin position="662"/>
        <end position="832"/>
    </location>
</feature>
<feature type="transmembrane region" description="Helical" evidence="1">
    <location>
        <begin position="833"/>
        <end position="848"/>
    </location>
</feature>
<feature type="topological domain" description="Cytoplasmic" evidence="1">
    <location>
        <begin position="849"/>
        <end position="1043"/>
    </location>
</feature>
<feature type="region of interest" description="Disordered" evidence="5">
    <location>
        <begin position="882"/>
        <end position="924"/>
    </location>
</feature>
<feature type="region of interest" description="Involved in the trafficking and surface expression of NMDARs" evidence="3">
    <location>
        <begin position="979"/>
        <end position="1012"/>
    </location>
</feature>
<feature type="region of interest" description="Disordered" evidence="5">
    <location>
        <begin position="1012"/>
        <end position="1043"/>
    </location>
</feature>
<feature type="compositionally biased region" description="Low complexity" evidence="5">
    <location>
        <begin position="1024"/>
        <end position="1035"/>
    </location>
</feature>
<feature type="binding site" evidence="2">
    <location>
        <position position="531"/>
    </location>
    <ligand>
        <name>glycine</name>
        <dbReference type="ChEBI" id="CHEBI:57305"/>
    </ligand>
</feature>
<feature type="binding site" evidence="2">
    <location>
        <position position="533"/>
    </location>
    <ligand>
        <name>D-serine</name>
        <dbReference type="ChEBI" id="CHEBI:35247"/>
    </ligand>
</feature>
<feature type="binding site" evidence="2">
    <location>
        <position position="533"/>
    </location>
    <ligand>
        <name>glycine</name>
        <dbReference type="ChEBI" id="CHEBI:57305"/>
    </ligand>
</feature>
<feature type="binding site" evidence="2">
    <location>
        <position position="538"/>
    </location>
    <ligand>
        <name>D-serine</name>
        <dbReference type="ChEBI" id="CHEBI:35247"/>
    </ligand>
</feature>
<feature type="binding site" evidence="2">
    <location>
        <position position="538"/>
    </location>
    <ligand>
        <name>glycine</name>
        <dbReference type="ChEBI" id="CHEBI:57305"/>
    </ligand>
</feature>
<feature type="binding site" evidence="2">
    <location>
        <position position="701"/>
    </location>
    <ligand>
        <name>D-serine</name>
        <dbReference type="ChEBI" id="CHEBI:35247"/>
    </ligand>
</feature>
<feature type="binding site" evidence="2">
    <location>
        <position position="701"/>
    </location>
    <ligand>
        <name>glycine</name>
        <dbReference type="ChEBI" id="CHEBI:57305"/>
    </ligand>
</feature>
<feature type="binding site" evidence="2">
    <location>
        <position position="702"/>
    </location>
    <ligand>
        <name>D-serine</name>
        <dbReference type="ChEBI" id="CHEBI:35247"/>
    </ligand>
</feature>
<feature type="binding site" evidence="2">
    <location>
        <position position="745"/>
    </location>
    <ligand>
        <name>D-serine</name>
        <dbReference type="ChEBI" id="CHEBI:35247"/>
    </ligand>
</feature>
<feature type="binding site" evidence="2">
    <location>
        <position position="745"/>
    </location>
    <ligand>
        <name>glycine</name>
        <dbReference type="ChEBI" id="CHEBI:57305"/>
    </ligand>
</feature>
<feature type="glycosylation site" description="N-linked (GlcNAc...) asparagine" evidence="4">
    <location>
        <position position="69"/>
    </location>
</feature>
<feature type="glycosylation site" description="N-linked (GlcNAc...) asparagine" evidence="4">
    <location>
        <position position="344"/>
    </location>
</feature>
<feature type="glycosylation site" description="N-linked (GlcNAc...) asparagine" evidence="4">
    <location>
        <position position="451"/>
    </location>
</feature>
<feature type="glycosylation site" description="N-linked (GlcNAc...) asparagine" evidence="4">
    <location>
        <position position="465"/>
    </location>
</feature>
<feature type="glycosylation site" description="N-linked (GlcNAc...) asparagine" evidence="4">
    <location>
        <position position="786"/>
    </location>
</feature>
<feature type="disulfide bond" evidence="2">
    <location>
        <begin position="439"/>
        <end position="475"/>
    </location>
</feature>
<feature type="disulfide bond" evidence="2">
    <location>
        <begin position="445"/>
        <end position="476"/>
    </location>
</feature>
<feature type="sequence variant" id="VAR_019676" description="In dbSNP:rs2240154.">
    <original>T</original>
    <variation>M</variation>
    <location>
        <position position="157"/>
    </location>
</feature>
<feature type="sequence variant" id="VAR_079909" description="In dbSNP:rs201484790." evidence="6">
    <original>R</original>
    <variation>C</variation>
    <location>
        <position position="180"/>
    </location>
</feature>
<feature type="sequence variant" id="VAR_079910" description="In dbSNP:rs199717057." evidence="6">
    <original>R</original>
    <variation>W</variation>
    <location>
        <position position="194"/>
    </location>
</feature>
<feature type="sequence variant" id="VAR_079911" description="In dbSNP:rs370645758." evidence="6">
    <original>R</original>
    <variation>Q</variation>
    <location>
        <position position="247"/>
    </location>
</feature>
<feature type="sequence variant" id="VAR_079912" description="In dbSNP:rs143106549." evidence="6">
    <original>R</original>
    <variation>W</variation>
    <location>
        <position position="247"/>
    </location>
</feature>
<feature type="sequence variant" id="VAR_079913" description="Found in a patient with autism spectrum disorder; uncertain significance." evidence="6">
    <original>A</original>
    <variation>G</variation>
    <location>
        <position position="285"/>
    </location>
</feature>
<feature type="sequence variant" id="VAR_079914" description="In dbSNP:rs200777913." evidence="6">
    <original>E</original>
    <variation>K</variation>
    <location>
        <position position="332"/>
    </location>
</feature>
<feature type="sequence variant" id="VAR_079915" description="Found in a patient with schizophrenia; uncertain significance; dbSNP:rs1043645806." evidence="6">
    <original>R</original>
    <variation>C</variation>
    <location>
        <position position="336"/>
    </location>
</feature>
<feature type="sequence variant" id="VAR_079916" description="In dbSNP:rs144334537." evidence="6">
    <original>R</original>
    <variation>H</variation>
    <location>
        <position position="350"/>
    </location>
</feature>
<feature type="sequence variant" id="VAR_079917" description="Found in a patient with schizophrenia; uncertain significance; dbSNP:rs935843296." evidence="6">
    <original>P</original>
    <variation>L</variation>
    <location>
        <position position="381"/>
    </location>
</feature>
<feature type="sequence variant" id="VAR_019677" description="In dbSNP:rs4807399.">
    <original>R</original>
    <variation>W</variation>
    <location>
        <position position="404"/>
    </location>
</feature>
<feature type="sequence variant" id="VAR_019678" description="In dbSNP:rs2240157.">
    <original>W</original>
    <variation>R</variation>
    <location>
        <position position="414"/>
    </location>
</feature>
<feature type="sequence variant" id="VAR_079918" description="Found in a patient with schizophrenia; uncertain significance; dbSNP:rs1253903191." evidence="6">
    <original>R</original>
    <variation>H</variation>
    <location>
        <position position="470"/>
    </location>
</feature>
<feature type="sequence variant" id="VAR_079919" description="Found in a patient with autism spectrum disorder; uncertain significance; dbSNP:rs1599457596." evidence="6">
    <original>L</original>
    <variation>P</variation>
    <location>
        <position position="472"/>
    </location>
</feature>
<feature type="sequence variant" id="VAR_079920" description="In dbSNP:rs375104717." evidence="6">
    <original>G</original>
    <variation>S</variation>
    <location>
        <position position="515"/>
    </location>
</feature>
<feature type="sequence variant" id="VAR_019679" description="In dbSNP:rs2240158.">
    <original>T</original>
    <variation>M</variation>
    <location>
        <position position="577"/>
    </location>
</feature>
<feature type="sequence variant" id="VAR_079921" description="In dbSNP:rs769335041." evidence="6">
    <original>A</original>
    <variation>V</variation>
    <location>
        <position position="583"/>
    </location>
</feature>
<feature type="sequence variant" id="VAR_079922" description="In dbSNP:rs139187576." evidence="6">
    <original>R</original>
    <variation>C</variation>
    <location>
        <position position="598"/>
    </location>
</feature>
<feature type="sequence variant" id="VAR_079923" description="In dbSNP:rs540348423." evidence="6">
    <original>R</original>
    <variation>H</variation>
    <location>
        <position position="608"/>
    </location>
</feature>
<feature type="sequence variant" id="VAR_061188" description="In dbSNP:rs60621387.">
    <original>T</original>
    <variation>A</variation>
    <location>
        <position position="612"/>
    </location>
</feature>
<feature type="sequence variant" id="VAR_079924" description="Found in a patient with autism spectrum disorder; uncertain significance; dbSNP:rs778377243." evidence="6">
    <original>T</original>
    <variation>M</variation>
    <location>
        <position position="641"/>
    </location>
</feature>
<feature type="sequence variant" id="VAR_079925" description="In dbSNP:rs138448790." evidence="6">
    <original>S</original>
    <variation>L</variation>
    <location>
        <position position="678"/>
    </location>
</feature>
<feature type="sequence variant" id="VAR_019680" description="In dbSNP:rs2285906.">
    <original>A</original>
    <variation>T</variation>
    <location>
        <position position="845"/>
    </location>
</feature>
<feature type="sequence variant" id="VAR_079926" description="Found in a patient with autism spectrum disorder; uncertain significance; dbSNP:rs750024778." evidence="6">
    <original>E</original>
    <variation>D</variation>
    <location>
        <position position="919"/>
    </location>
</feature>
<feature type="sequence variant" id="VAR_079927" description="In dbSNP:rs200419950." evidence="6">
    <original>V</original>
    <variation>M</variation>
    <location>
        <position position="928"/>
    </location>
</feature>
<feature type="sequence variant" id="VAR_079928" description="Found in a patient with schizophrenia; uncertain significance; dbSNP:rs769956227." evidence="6">
    <original>A</original>
    <variation>V</variation>
    <location>
        <position position="948"/>
    </location>
</feature>
<evidence type="ECO:0000250" key="1">
    <source>
        <dbReference type="UniProtKB" id="Q13224"/>
    </source>
</evidence>
<evidence type="ECO:0000250" key="2">
    <source>
        <dbReference type="UniProtKB" id="Q8VHN2"/>
    </source>
</evidence>
<evidence type="ECO:0000250" key="3">
    <source>
        <dbReference type="UniProtKB" id="Q91ZU9"/>
    </source>
</evidence>
<evidence type="ECO:0000255" key="4"/>
<evidence type="ECO:0000256" key="5">
    <source>
        <dbReference type="SAM" id="MobiDB-lite"/>
    </source>
</evidence>
<evidence type="ECO:0000269" key="6">
    <source>
    </source>
</evidence>
<evidence type="ECO:0000303" key="7">
    <source>
    </source>
</evidence>
<evidence type="ECO:0000305" key="8"/>
<evidence type="ECO:0000312" key="9">
    <source>
        <dbReference type="HGNC" id="HGNC:16768"/>
    </source>
</evidence>
<reference key="1">
    <citation type="journal article" date="2004" name="Nature">
        <title>The DNA sequence and biology of human chromosome 19.</title>
        <authorList>
            <person name="Grimwood J."/>
            <person name="Gordon L.A."/>
            <person name="Olsen A.S."/>
            <person name="Terry A."/>
            <person name="Schmutz J."/>
            <person name="Lamerdin J.E."/>
            <person name="Hellsten U."/>
            <person name="Goodstein D."/>
            <person name="Couronne O."/>
            <person name="Tran-Gyamfi M."/>
            <person name="Aerts A."/>
            <person name="Altherr M."/>
            <person name="Ashworth L."/>
            <person name="Bajorek E."/>
            <person name="Black S."/>
            <person name="Branscomb E."/>
            <person name="Caenepeel S."/>
            <person name="Carrano A.V."/>
            <person name="Caoile C."/>
            <person name="Chan Y.M."/>
            <person name="Christensen M."/>
            <person name="Cleland C.A."/>
            <person name="Copeland A."/>
            <person name="Dalin E."/>
            <person name="Dehal P."/>
            <person name="Denys M."/>
            <person name="Detter J.C."/>
            <person name="Escobar J."/>
            <person name="Flowers D."/>
            <person name="Fotopulos D."/>
            <person name="Garcia C."/>
            <person name="Georgescu A.M."/>
            <person name="Glavina T."/>
            <person name="Gomez M."/>
            <person name="Gonzales E."/>
            <person name="Groza M."/>
            <person name="Hammon N."/>
            <person name="Hawkins T."/>
            <person name="Haydu L."/>
            <person name="Ho I."/>
            <person name="Huang W."/>
            <person name="Israni S."/>
            <person name="Jett J."/>
            <person name="Kadner K."/>
            <person name="Kimball H."/>
            <person name="Kobayashi A."/>
            <person name="Larionov V."/>
            <person name="Leem S.-H."/>
            <person name="Lopez F."/>
            <person name="Lou Y."/>
            <person name="Lowry S."/>
            <person name="Malfatti S."/>
            <person name="Martinez D."/>
            <person name="McCready P.M."/>
            <person name="Medina C."/>
            <person name="Morgan J."/>
            <person name="Nelson K."/>
            <person name="Nolan M."/>
            <person name="Ovcharenko I."/>
            <person name="Pitluck S."/>
            <person name="Pollard M."/>
            <person name="Popkie A.P."/>
            <person name="Predki P."/>
            <person name="Quan G."/>
            <person name="Ramirez L."/>
            <person name="Rash S."/>
            <person name="Retterer J."/>
            <person name="Rodriguez A."/>
            <person name="Rogers S."/>
            <person name="Salamov A."/>
            <person name="Salazar A."/>
            <person name="She X."/>
            <person name="Smith D."/>
            <person name="Slezak T."/>
            <person name="Solovyev V."/>
            <person name="Thayer N."/>
            <person name="Tice H."/>
            <person name="Tsai M."/>
            <person name="Ustaszewska A."/>
            <person name="Vo N."/>
            <person name="Wagner M."/>
            <person name="Wheeler J."/>
            <person name="Wu K."/>
            <person name="Xie G."/>
            <person name="Yang J."/>
            <person name="Dubchak I."/>
            <person name="Furey T.S."/>
            <person name="DeJong P."/>
            <person name="Dickson M."/>
            <person name="Gordon D."/>
            <person name="Eichler E.E."/>
            <person name="Pennacchio L.A."/>
            <person name="Richardson P."/>
            <person name="Stubbs L."/>
            <person name="Rokhsar D.S."/>
            <person name="Myers R.M."/>
            <person name="Rubin E.M."/>
            <person name="Lucas S.M."/>
        </authorList>
    </citation>
    <scope>NUCLEOTIDE SEQUENCE [LARGE SCALE GENOMIC DNA]</scope>
</reference>
<reference key="2">
    <citation type="journal article" date="2001" name="Genomics">
        <title>Nucleotide sequence, genomic organization, and chromosomal localization of genes encoding the human NMDA receptor subunits NR3A and NR3B.</title>
        <authorList>
            <person name="Andersson O."/>
            <person name="Stenqvist A."/>
            <person name="Attersand A."/>
            <person name="von Euler G."/>
        </authorList>
    </citation>
    <scope>IDENTIFICATION</scope>
</reference>
<reference key="3">
    <citation type="journal article" date="2001" name="J. Neurosci.">
        <title>Motoneuron-specific expression of NR3B, a novel NMDA-type glutamate receptor subunit that works in a dominant-negative manner.</title>
        <authorList>
            <person name="Nishi M."/>
            <person name="Hinds H."/>
            <person name="Lu H.-P."/>
            <person name="Kawata M."/>
            <person name="Hayashi Y."/>
        </authorList>
    </citation>
    <scope>IDENTIFICATION</scope>
</reference>
<reference key="4">
    <citation type="journal article" date="2005" name="Neurosci. Lett.">
        <title>Cloning and expression of the human NMDA receptor subunit NR3B in the adult human hippocampus.</title>
        <authorList>
            <person name="Bendel O."/>
            <person name="Meijer B."/>
            <person name="Hurd Y."/>
            <person name="von Euler G."/>
        </authorList>
    </citation>
    <scope>IDENTIFICATION</scope>
</reference>
<reference key="5">
    <citation type="journal article" date="2011" name="Transl. Psychiatry">
        <title>Rare mutations in N-methyl-D-aspartate glutamate receptors in autism spectrum disorders and schizophrenia.</title>
        <authorList>
            <consortium name="S2D team"/>
            <person name="Tarabeux J."/>
            <person name="Kebir O."/>
            <person name="Gauthier J."/>
            <person name="Hamdan F.F."/>
            <person name="Xiong L."/>
            <person name="Piton A."/>
            <person name="Spiegelman D."/>
            <person name="Henrion E."/>
            <person name="Millet B."/>
            <person name="Fathalli F."/>
            <person name="Joober R."/>
            <person name="Rapoport J.L."/>
            <person name="DeLisi L.E."/>
            <person name="Fombonne E."/>
            <person name="Mottron L."/>
            <person name="Forget-Dubois N."/>
            <person name="Boivin M."/>
            <person name="Michaud J.L."/>
            <person name="Drapeau P."/>
            <person name="Lafreniere R.G."/>
            <person name="Rouleau G.A."/>
            <person name="Krebs M.O."/>
        </authorList>
    </citation>
    <scope>VARIANTS CYS-180; TRP-194; GLN-247; TRP-247; GLY-285; LYS-332; CYS-336; HIS-350; LEU-381; HIS-470; PRO-472; SER-515; VAL-583; CYS-598; HIS-608; MET-641; LEU-678; ASP-919; MET-928 AND VAL-948</scope>
</reference>
<sequence>MEFVRALWLGLALALGPGSAGGHPQPCGVLARLGGSVRLGALLPRAPLARARARAALARAALAPRLPHNLSLELVVAAPPARDPASLTRGLCQALVPPGVAALLAFPEARPELLQLHFLAAATETPVLSLLRREARAPLGAPNPFHLQLHWASPLETLLDVLVAVLQAHAWEDVGLALCRTQDPGGLVALWTSRAGRPPQLVLDLSRRDTGDAGLRARLAPMAAPVGGEAPVPAAVLLGCDIARARRVLEAVPPGPHWLLGTPLPPKALPTAGLPPGLLALGEVARPPLEAAIHDIVQLVARALGSAAQVQPKRALLPAPVNCGDLQPAGPESPGRFLARFLANTSFQGRTGPVWVTGSSQVHMSRHFKVWSLRRDPRGAPAWATVGSWRDGQLDLEPGGASARPPPPQGAQVWPKLRVVTLLEHPFVFARDPDEDGQCPAGQLCLDPGTNDSATLDALFAALANGSAPRALRKCCYGYCIDLLERLAEDTPFDFELYLVGDGKYGALRDGRWTGLVGDLLAGRAHMAVTSFSINSARSQVVDFTSPFFSTSLGIMVRARDTASPIGAFMWPLHWSTWLGVFAALHLTALFLTVYEWRSPYGLTPRGRNRSTVFSYSSALNLCYAILFRRTVSSKTPKCPTGRLLMNLWAIFCLLVLSSYTANLAAVMVGDKTFEELSGIHDPKLHHPAQGFRFGTVWESSAEAYIKKSFPDMHAHMRRHSAPTTPRGVAMLTSDPPKLNAFIMDKSLLDYEVSIDADCKLLTVGKPFAIEGYGIGLPQNSPLTSNLSEFISRYKSSGFIDLLHDKWYKMVPCGKRVFAVTETLQMSIYHFAGLFVLLCLGLGSALLSSLGEHAFFRLALPRIRKGSRLQYWLHTSQKIHRALNTEPPEGSKEETAEAEPSGPEVEQQQQQQDQPTAPEGWKRARRAVDKERRVRFLLEPAVVVAPEADAEAEAAPREGPVWLCSYGRPPAARPTGAPQPGELQELERRIEVARERLRQALVRRGQLLAQLGDSARHRPRRLLQARAAPAEAPPHSGRPGSQE</sequence>
<keyword id="KW-0106">Calcium</keyword>
<keyword id="KW-1003">Cell membrane</keyword>
<keyword id="KW-1015">Disulfide bond</keyword>
<keyword id="KW-0325">Glycoprotein</keyword>
<keyword id="KW-0407">Ion channel</keyword>
<keyword id="KW-0406">Ion transport</keyword>
<keyword id="KW-1071">Ligand-gated ion channel</keyword>
<keyword id="KW-0460">Magnesium</keyword>
<keyword id="KW-0472">Membrane</keyword>
<keyword id="KW-0628">Postsynaptic cell membrane</keyword>
<keyword id="KW-1267">Proteomics identification</keyword>
<keyword id="KW-0675">Receptor</keyword>
<keyword id="KW-1185">Reference proteome</keyword>
<keyword id="KW-0732">Signal</keyword>
<keyword id="KW-0770">Synapse</keyword>
<keyword id="KW-0812">Transmembrane</keyword>
<keyword id="KW-1133">Transmembrane helix</keyword>
<keyword id="KW-0813">Transport</keyword>
<organism>
    <name type="scientific">Homo sapiens</name>
    <name type="common">Human</name>
    <dbReference type="NCBI Taxonomy" id="9606"/>
    <lineage>
        <taxon>Eukaryota</taxon>
        <taxon>Metazoa</taxon>
        <taxon>Chordata</taxon>
        <taxon>Craniata</taxon>
        <taxon>Vertebrata</taxon>
        <taxon>Euteleostomi</taxon>
        <taxon>Mammalia</taxon>
        <taxon>Eutheria</taxon>
        <taxon>Euarchontoglires</taxon>
        <taxon>Primates</taxon>
        <taxon>Haplorrhini</taxon>
        <taxon>Catarrhini</taxon>
        <taxon>Hominidae</taxon>
        <taxon>Homo</taxon>
    </lineage>
</organism>
<proteinExistence type="evidence at protein level"/>
<dbReference type="EMBL" id="AC004528">
    <property type="protein sequence ID" value="AAC12680.1"/>
    <property type="status" value="ALT_SEQ"/>
    <property type="molecule type" value="Genomic_DNA"/>
</dbReference>
<dbReference type="EMBL" id="BK000070">
    <property type="protein sequence ID" value="DAA00018.1"/>
    <property type="molecule type" value="mRNA"/>
</dbReference>
<dbReference type="EMBL" id="BK004079">
    <property type="protein sequence ID" value="DAA04570.1"/>
    <property type="molecule type" value="mRNA"/>
</dbReference>
<dbReference type="CCDS" id="CCDS32861.1"/>
<dbReference type="RefSeq" id="NP_619635.1">
    <property type="nucleotide sequence ID" value="NM_138690.3"/>
</dbReference>
<dbReference type="SMR" id="O60391"/>
<dbReference type="BioGRID" id="125509">
    <property type="interactions" value="34"/>
</dbReference>
<dbReference type="CORUM" id="O60391"/>
<dbReference type="FunCoup" id="O60391">
    <property type="interactions" value="595"/>
</dbReference>
<dbReference type="IntAct" id="O60391">
    <property type="interactions" value="24"/>
</dbReference>
<dbReference type="STRING" id="9606.ENSP00000234389"/>
<dbReference type="BindingDB" id="O60391"/>
<dbReference type="ChEMBL" id="CHEMBL2094124"/>
<dbReference type="DrugBank" id="DB00659">
    <property type="generic name" value="Acamprosate"/>
</dbReference>
<dbReference type="DrugBank" id="DB01238">
    <property type="generic name" value="Aripiprazole"/>
</dbReference>
<dbReference type="DrugBank" id="DB00289">
    <property type="generic name" value="Atomoxetine"/>
</dbReference>
<dbReference type="DrugBank" id="DB00647">
    <property type="generic name" value="Dextropropoxyphene"/>
</dbReference>
<dbReference type="DrugBank" id="DB00843">
    <property type="generic name" value="Donepezil"/>
</dbReference>
<dbReference type="DrugBank" id="DB00228">
    <property type="generic name" value="Enflurane"/>
</dbReference>
<dbReference type="DrugBank" id="DB11823">
    <property type="generic name" value="Esketamine"/>
</dbReference>
<dbReference type="DrugBank" id="DB13146">
    <property type="generic name" value="Fluciclovine (18F)"/>
</dbReference>
<dbReference type="DrugBank" id="DB06741">
    <property type="generic name" value="Gavestinel"/>
</dbReference>
<dbReference type="DrugBank" id="DB00145">
    <property type="generic name" value="Glycine"/>
</dbReference>
<dbReference type="DrugBank" id="DB00874">
    <property type="generic name" value="Guaifenesin"/>
</dbReference>
<dbReference type="DrugBank" id="DB01159">
    <property type="generic name" value="Halothane"/>
</dbReference>
<dbReference type="DrugBank" id="DB06738">
    <property type="generic name" value="Ketobemidone"/>
</dbReference>
<dbReference type="DrugBank" id="DB09409">
    <property type="generic name" value="Magnesium acetate tetrahydrate"/>
</dbReference>
<dbReference type="DrugBank" id="DB09481">
    <property type="generic name" value="Magnesium carbonate"/>
</dbReference>
<dbReference type="DrugBank" id="DB01043">
    <property type="generic name" value="Memantine"/>
</dbReference>
<dbReference type="DrugBank" id="DB00333">
    <property type="generic name" value="Methadone"/>
</dbReference>
<dbReference type="DrugBank" id="DB04896">
    <property type="generic name" value="Milnacipran"/>
</dbReference>
<dbReference type="DrugBank" id="DB01173">
    <property type="generic name" value="Orphenadrine"/>
</dbReference>
<dbReference type="DrugBank" id="DB00312">
    <property type="generic name" value="Pentobarbital"/>
</dbReference>
<dbReference type="DrugBank" id="DB01174">
    <property type="generic name" value="Phenobarbital"/>
</dbReference>
<dbReference type="DrugBank" id="DB01708">
    <property type="generic name" value="Prasterone"/>
</dbReference>
<dbReference type="DrugBank" id="DB00418">
    <property type="generic name" value="Secobarbital"/>
</dbReference>
<dbReference type="DrugBank" id="DB01520">
    <property type="generic name" value="Tenocyclidine"/>
</dbReference>
<dbReference type="DrugBank" id="DB00193">
    <property type="generic name" value="Tramadol"/>
</dbReference>
<dbReference type="DrugCentral" id="O60391"/>
<dbReference type="GlyCosmos" id="O60391">
    <property type="glycosylation" value="5 sites, No reported glycans"/>
</dbReference>
<dbReference type="GlyGen" id="O60391">
    <property type="glycosylation" value="6 sites, 1 N-linked glycan (1 site), 1 O-linked glycan (1 site)"/>
</dbReference>
<dbReference type="iPTMnet" id="O60391"/>
<dbReference type="PhosphoSitePlus" id="O60391"/>
<dbReference type="BioMuta" id="GRIN3B"/>
<dbReference type="MassIVE" id="O60391"/>
<dbReference type="PaxDb" id="9606-ENSP00000234389"/>
<dbReference type="PeptideAtlas" id="O60391"/>
<dbReference type="ProteomicsDB" id="49388"/>
<dbReference type="Antibodypedia" id="10301">
    <property type="antibodies" value="154 antibodies from 26 providers"/>
</dbReference>
<dbReference type="DNASU" id="116444"/>
<dbReference type="Ensembl" id="ENST00000234389.3">
    <property type="protein sequence ID" value="ENSP00000234389.3"/>
    <property type="gene ID" value="ENSG00000116032.5"/>
</dbReference>
<dbReference type="GeneID" id="116444"/>
<dbReference type="KEGG" id="hsa:116444"/>
<dbReference type="MANE-Select" id="ENST00000234389.3">
    <property type="protein sequence ID" value="ENSP00000234389.3"/>
    <property type="RefSeq nucleotide sequence ID" value="NM_138690.3"/>
    <property type="RefSeq protein sequence ID" value="NP_619635.1"/>
</dbReference>
<dbReference type="UCSC" id="uc002lqo.2">
    <property type="organism name" value="human"/>
</dbReference>
<dbReference type="AGR" id="HGNC:16768"/>
<dbReference type="CTD" id="116444"/>
<dbReference type="DisGeNET" id="116444"/>
<dbReference type="GeneCards" id="GRIN3B"/>
<dbReference type="HGNC" id="HGNC:16768">
    <property type="gene designation" value="GRIN3B"/>
</dbReference>
<dbReference type="HPA" id="ENSG00000116032">
    <property type="expression patterns" value="Tissue enhanced (fallopian)"/>
</dbReference>
<dbReference type="MalaCards" id="GRIN3B"/>
<dbReference type="MIM" id="606651">
    <property type="type" value="gene"/>
</dbReference>
<dbReference type="neXtProt" id="NX_O60391"/>
<dbReference type="OpenTargets" id="ENSG00000116032"/>
<dbReference type="PharmGKB" id="PA28984"/>
<dbReference type="VEuPathDB" id="HostDB:ENSG00000116032"/>
<dbReference type="eggNOG" id="KOG1053">
    <property type="taxonomic scope" value="Eukaryota"/>
</dbReference>
<dbReference type="GeneTree" id="ENSGT00940000161021"/>
<dbReference type="HOGENOM" id="CLU_002039_0_1_1"/>
<dbReference type="InParanoid" id="O60391"/>
<dbReference type="OMA" id="NCGDLQP"/>
<dbReference type="OrthoDB" id="5984008at2759"/>
<dbReference type="PAN-GO" id="O60391">
    <property type="GO annotations" value="5 GO annotations based on evolutionary models"/>
</dbReference>
<dbReference type="PhylomeDB" id="O60391"/>
<dbReference type="TreeFam" id="TF314731"/>
<dbReference type="PathwayCommons" id="O60391"/>
<dbReference type="Reactome" id="R-HSA-9609736">
    <property type="pathway name" value="Assembly and cell surface presentation of NMDA receptors"/>
</dbReference>
<dbReference type="SignaLink" id="O60391"/>
<dbReference type="BioGRID-ORCS" id="116444">
    <property type="hits" value="18 hits in 1158 CRISPR screens"/>
</dbReference>
<dbReference type="ChiTaRS" id="GRIN3B">
    <property type="organism name" value="human"/>
</dbReference>
<dbReference type="GeneWiki" id="GRIN3B"/>
<dbReference type="GenomeRNAi" id="116444"/>
<dbReference type="Pharos" id="O60391">
    <property type="development level" value="Tclin"/>
</dbReference>
<dbReference type="PRO" id="PR:O60391"/>
<dbReference type="Proteomes" id="UP000005640">
    <property type="component" value="Chromosome 19"/>
</dbReference>
<dbReference type="RNAct" id="O60391">
    <property type="molecule type" value="protein"/>
</dbReference>
<dbReference type="Bgee" id="ENSG00000116032">
    <property type="expression patterns" value="Expressed in right uterine tube and 89 other cell types or tissues"/>
</dbReference>
<dbReference type="GO" id="GO:0034702">
    <property type="term" value="C:monoatomic ion channel complex"/>
    <property type="evidence" value="ECO:0000250"/>
    <property type="project" value="UniProt"/>
</dbReference>
<dbReference type="GO" id="GO:0043025">
    <property type="term" value="C:neuronal cell body"/>
    <property type="evidence" value="ECO:0000250"/>
    <property type="project" value="UniProtKB"/>
</dbReference>
<dbReference type="GO" id="GO:0098878">
    <property type="term" value="C:neurotransmitter receptor complex"/>
    <property type="evidence" value="ECO:0000250"/>
    <property type="project" value="UniProt"/>
</dbReference>
<dbReference type="GO" id="GO:0017146">
    <property type="term" value="C:NMDA selective glutamate receptor complex"/>
    <property type="evidence" value="ECO:0000250"/>
    <property type="project" value="UniProtKB"/>
</dbReference>
<dbReference type="GO" id="GO:0005886">
    <property type="term" value="C:plasma membrane"/>
    <property type="evidence" value="ECO:0000318"/>
    <property type="project" value="GO_Central"/>
</dbReference>
<dbReference type="GO" id="GO:0098839">
    <property type="term" value="C:postsynaptic density membrane"/>
    <property type="evidence" value="ECO:0000318"/>
    <property type="project" value="GO_Central"/>
</dbReference>
<dbReference type="GO" id="GO:0042734">
    <property type="term" value="C:presynaptic membrane"/>
    <property type="evidence" value="ECO:0000250"/>
    <property type="project" value="UniProt"/>
</dbReference>
<dbReference type="GO" id="GO:0005262">
    <property type="term" value="F:calcium channel activity"/>
    <property type="evidence" value="ECO:0007669"/>
    <property type="project" value="Ensembl"/>
</dbReference>
<dbReference type="GO" id="GO:0008066">
    <property type="term" value="F:glutamate receptor activity"/>
    <property type="evidence" value="ECO:0000318"/>
    <property type="project" value="GO_Central"/>
</dbReference>
<dbReference type="GO" id="GO:0016594">
    <property type="term" value="F:glycine binding"/>
    <property type="evidence" value="ECO:0000250"/>
    <property type="project" value="UniProtKB"/>
</dbReference>
<dbReference type="GO" id="GO:0160212">
    <property type="term" value="F:glycine-gated cation channel activity"/>
    <property type="evidence" value="ECO:0000250"/>
    <property type="project" value="UniProt"/>
</dbReference>
<dbReference type="GO" id="GO:0099507">
    <property type="term" value="F:ligand-gated monoatomic ion channel activity involved in regulation of presynaptic membrane potential"/>
    <property type="evidence" value="ECO:0000314"/>
    <property type="project" value="SynGO"/>
</dbReference>
<dbReference type="GO" id="GO:0005261">
    <property type="term" value="F:monoatomic cation channel activity"/>
    <property type="evidence" value="ECO:0000250"/>
    <property type="project" value="UniProtKB"/>
</dbReference>
<dbReference type="GO" id="GO:0030594">
    <property type="term" value="F:neurotransmitter receptor activity"/>
    <property type="evidence" value="ECO:0000250"/>
    <property type="project" value="UniProtKB"/>
</dbReference>
<dbReference type="GO" id="GO:1904315">
    <property type="term" value="F:transmitter-gated monoatomic ion channel activity involved in regulation of postsynaptic membrane potential"/>
    <property type="evidence" value="ECO:0000318"/>
    <property type="project" value="GO_Central"/>
</dbReference>
<dbReference type="GO" id="GO:0035235">
    <property type="term" value="P:ionotropic glutamate receptor signaling pathway"/>
    <property type="evidence" value="ECO:0000250"/>
    <property type="project" value="UniProtKB"/>
</dbReference>
<dbReference type="GO" id="GO:0050804">
    <property type="term" value="P:modulation of chemical synaptic transmission"/>
    <property type="evidence" value="ECO:0000318"/>
    <property type="project" value="GO_Central"/>
</dbReference>
<dbReference type="GO" id="GO:0098655">
    <property type="term" value="P:monoatomic cation transmembrane transport"/>
    <property type="evidence" value="ECO:0000250"/>
    <property type="project" value="UniProt"/>
</dbReference>
<dbReference type="GO" id="GO:0051205">
    <property type="term" value="P:protein insertion into membrane"/>
    <property type="evidence" value="ECO:0000250"/>
    <property type="project" value="UniProtKB"/>
</dbReference>
<dbReference type="GO" id="GO:0051924">
    <property type="term" value="P:regulation of calcium ion transport"/>
    <property type="evidence" value="ECO:0000250"/>
    <property type="project" value="UniProtKB"/>
</dbReference>
<dbReference type="GO" id="GO:0048167">
    <property type="term" value="P:regulation of synaptic plasticity"/>
    <property type="evidence" value="ECO:0000250"/>
    <property type="project" value="UniProtKB"/>
</dbReference>
<dbReference type="GO" id="GO:0035249">
    <property type="term" value="P:synaptic transmission, glutamatergic"/>
    <property type="evidence" value="ECO:0000318"/>
    <property type="project" value="GO_Central"/>
</dbReference>
<dbReference type="CDD" id="cd06377">
    <property type="entry name" value="PBP1_iGluR_NMDA_NR3"/>
    <property type="match status" value="1"/>
</dbReference>
<dbReference type="CDD" id="cd13720">
    <property type="entry name" value="PBP2_iGluR_NMDA_Nr3"/>
    <property type="match status" value="1"/>
</dbReference>
<dbReference type="FunFam" id="3.40.190.10:FF:000066">
    <property type="entry name" value="Glutamate receptor ionotropic, NMDA 3A"/>
    <property type="match status" value="1"/>
</dbReference>
<dbReference type="FunFam" id="3.40.190.10:FF:000045">
    <property type="entry name" value="Putative glutamate receptor ionotropic NMDA 3A"/>
    <property type="match status" value="1"/>
</dbReference>
<dbReference type="Gene3D" id="3.40.50.2300">
    <property type="match status" value="1"/>
</dbReference>
<dbReference type="Gene3D" id="3.40.190.10">
    <property type="entry name" value="Periplasmic binding protein-like II"/>
    <property type="match status" value="2"/>
</dbReference>
<dbReference type="InterPro" id="IPR019594">
    <property type="entry name" value="Glu/Gly-bd"/>
</dbReference>
<dbReference type="InterPro" id="IPR001508">
    <property type="entry name" value="Iono_Glu_rcpt_met"/>
</dbReference>
<dbReference type="InterPro" id="IPR015683">
    <property type="entry name" value="Ionotropic_Glu_rcpt"/>
</dbReference>
<dbReference type="InterPro" id="IPR001320">
    <property type="entry name" value="Iontro_rcpt_C"/>
</dbReference>
<dbReference type="InterPro" id="IPR028082">
    <property type="entry name" value="Peripla_BP_I"/>
</dbReference>
<dbReference type="PANTHER" id="PTHR18966">
    <property type="entry name" value="IONOTROPIC GLUTAMATE RECEPTOR"/>
    <property type="match status" value="1"/>
</dbReference>
<dbReference type="Pfam" id="PF00060">
    <property type="entry name" value="Lig_chan"/>
    <property type="match status" value="1"/>
</dbReference>
<dbReference type="Pfam" id="PF10613">
    <property type="entry name" value="Lig_chan-Glu_bd"/>
    <property type="match status" value="1"/>
</dbReference>
<dbReference type="PRINTS" id="PR00177">
    <property type="entry name" value="NMDARECEPTOR"/>
</dbReference>
<dbReference type="SMART" id="SM00918">
    <property type="entry name" value="Lig_chan-Glu_bd"/>
    <property type="match status" value="1"/>
</dbReference>
<dbReference type="SMART" id="SM00079">
    <property type="entry name" value="PBPe"/>
    <property type="match status" value="1"/>
</dbReference>
<dbReference type="SUPFAM" id="SSF53822">
    <property type="entry name" value="Periplasmic binding protein-like I"/>
    <property type="match status" value="1"/>
</dbReference>
<dbReference type="SUPFAM" id="SSF53850">
    <property type="entry name" value="Periplasmic binding protein-like II"/>
    <property type="match status" value="1"/>
</dbReference>
<name>NMD3B_HUMAN</name>
<protein>
    <recommendedName>
        <fullName evidence="8">Glutamate receptor ionotropic, NMDA 3B</fullName>
        <shortName>GluN3B</shortName>
    </recommendedName>
    <alternativeName>
        <fullName>N-methyl-D-aspartate receptor subtype 3B</fullName>
        <shortName>NMDAR3B</shortName>
        <shortName evidence="7">NR3B</shortName>
    </alternativeName>
</protein>
<accession>O60391</accession>
<accession>Q5EAK7</accession>
<accession>Q7RTW9</accession>